<organism>
    <name type="scientific">Photorhabdus laumondii subsp. laumondii (strain DSM 15139 / CIP 105565 / TT01)</name>
    <name type="common">Photorhabdus luminescens subsp. laumondii</name>
    <dbReference type="NCBI Taxonomy" id="243265"/>
    <lineage>
        <taxon>Bacteria</taxon>
        <taxon>Pseudomonadati</taxon>
        <taxon>Pseudomonadota</taxon>
        <taxon>Gammaproteobacteria</taxon>
        <taxon>Enterobacterales</taxon>
        <taxon>Morganellaceae</taxon>
        <taxon>Photorhabdus</taxon>
    </lineage>
</organism>
<name>ARGB_PHOLL</name>
<accession>Q7MYD7</accession>
<comment type="function">
    <text evidence="1">Catalyzes the ATP-dependent phosphorylation of N-acetyl-L-glutamate.</text>
</comment>
<comment type="catalytic activity">
    <reaction evidence="1">
        <text>N-acetyl-L-glutamate + ATP = N-acetyl-L-glutamyl 5-phosphate + ADP</text>
        <dbReference type="Rhea" id="RHEA:14629"/>
        <dbReference type="ChEBI" id="CHEBI:30616"/>
        <dbReference type="ChEBI" id="CHEBI:44337"/>
        <dbReference type="ChEBI" id="CHEBI:57936"/>
        <dbReference type="ChEBI" id="CHEBI:456216"/>
        <dbReference type="EC" id="2.7.2.8"/>
    </reaction>
</comment>
<comment type="pathway">
    <text evidence="1">Amino-acid biosynthesis; L-arginine biosynthesis; N(2)-acetyl-L-ornithine from L-glutamate: step 2/4.</text>
</comment>
<comment type="subunit">
    <text evidence="1">Homodimer.</text>
</comment>
<comment type="subcellular location">
    <subcellularLocation>
        <location evidence="1">Cytoplasm</location>
    </subcellularLocation>
</comment>
<comment type="similarity">
    <text evidence="1">Belongs to the acetylglutamate kinase family. ArgB subfamily.</text>
</comment>
<sequence length="257" mass="27359">MEPLVIKLGGVLLDNEEALERVFTALQEYRQTHERQLVVVHGGGYLVDELMEKLQLPIVKEQGLRVTPADQIGIITGALAGIANKTLLSWATKYQLASVGLYLGDGNVVTVSQLSEELGHVGKAMPGDAKLLKTLLDAGYMPIISSIGVTDKGELMNVNADQAATAIAQTLGADLVLLSDVSGILDGKGQKIPDINVEKAEQLIAHGIITDGMIVKVNAALDAARTLDRPVDIASWRHADQLTDLFNGVPVGTRILA</sequence>
<keyword id="KW-0028">Amino-acid biosynthesis</keyword>
<keyword id="KW-0055">Arginine biosynthesis</keyword>
<keyword id="KW-0067">ATP-binding</keyword>
<keyword id="KW-0963">Cytoplasm</keyword>
<keyword id="KW-0418">Kinase</keyword>
<keyword id="KW-0547">Nucleotide-binding</keyword>
<keyword id="KW-1185">Reference proteome</keyword>
<keyword id="KW-0808">Transferase</keyword>
<reference key="1">
    <citation type="journal article" date="2003" name="Nat. Biotechnol.">
        <title>The genome sequence of the entomopathogenic bacterium Photorhabdus luminescens.</title>
        <authorList>
            <person name="Duchaud E."/>
            <person name="Rusniok C."/>
            <person name="Frangeul L."/>
            <person name="Buchrieser C."/>
            <person name="Givaudan A."/>
            <person name="Taourit S."/>
            <person name="Bocs S."/>
            <person name="Boursaux-Eude C."/>
            <person name="Chandler M."/>
            <person name="Charles J.-F."/>
            <person name="Dassa E."/>
            <person name="Derose R."/>
            <person name="Derzelle S."/>
            <person name="Freyssinet G."/>
            <person name="Gaudriault S."/>
            <person name="Medigue C."/>
            <person name="Lanois A."/>
            <person name="Powell K."/>
            <person name="Siguier P."/>
            <person name="Vincent R."/>
            <person name="Wingate V."/>
            <person name="Zouine M."/>
            <person name="Glaser P."/>
            <person name="Boemare N."/>
            <person name="Danchin A."/>
            <person name="Kunst F."/>
        </authorList>
    </citation>
    <scope>NUCLEOTIDE SEQUENCE [LARGE SCALE GENOMIC DNA]</scope>
    <source>
        <strain>DSM 15139 / CIP 105565 / TT01</strain>
    </source>
</reference>
<gene>
    <name evidence="1" type="primary">argB</name>
    <name type="ordered locus">plu4743</name>
</gene>
<feature type="chain" id="PRO_0000112644" description="Acetylglutamate kinase">
    <location>
        <begin position="1"/>
        <end position="257"/>
    </location>
</feature>
<feature type="binding site" evidence="1">
    <location>
        <begin position="43"/>
        <end position="44"/>
    </location>
    <ligand>
        <name>substrate</name>
    </ligand>
</feature>
<feature type="binding site" evidence="1">
    <location>
        <position position="65"/>
    </location>
    <ligand>
        <name>substrate</name>
    </ligand>
</feature>
<feature type="binding site" evidence="1">
    <location>
        <position position="157"/>
    </location>
    <ligand>
        <name>substrate</name>
    </ligand>
</feature>
<feature type="binding site" evidence="1">
    <location>
        <begin position="180"/>
        <end position="185"/>
    </location>
    <ligand>
        <name>ATP</name>
        <dbReference type="ChEBI" id="CHEBI:30616"/>
    </ligand>
</feature>
<feature type="binding site" evidence="1">
    <location>
        <begin position="208"/>
        <end position="210"/>
    </location>
    <ligand>
        <name>ATP</name>
        <dbReference type="ChEBI" id="CHEBI:30616"/>
    </ligand>
</feature>
<feature type="site" description="Transition state stabilizer" evidence="1">
    <location>
        <position position="7"/>
    </location>
</feature>
<feature type="site" description="Transition state stabilizer" evidence="1">
    <location>
        <position position="216"/>
    </location>
</feature>
<proteinExistence type="inferred from homology"/>
<protein>
    <recommendedName>
        <fullName evidence="1">Acetylglutamate kinase</fullName>
        <ecNumber evidence="1">2.7.2.8</ecNumber>
    </recommendedName>
    <alternativeName>
        <fullName evidence="1">N-acetyl-L-glutamate 5-phosphotransferase</fullName>
    </alternativeName>
    <alternativeName>
        <fullName evidence="1">NAG kinase</fullName>
        <shortName evidence="1">NAGK</shortName>
    </alternativeName>
</protein>
<evidence type="ECO:0000255" key="1">
    <source>
        <dbReference type="HAMAP-Rule" id="MF_00082"/>
    </source>
</evidence>
<dbReference type="EC" id="2.7.2.8" evidence="1"/>
<dbReference type="EMBL" id="BX571874">
    <property type="protein sequence ID" value="CAE17115.1"/>
    <property type="molecule type" value="Genomic_DNA"/>
</dbReference>
<dbReference type="RefSeq" id="WP_011148811.1">
    <property type="nucleotide sequence ID" value="NC_005126.1"/>
</dbReference>
<dbReference type="SMR" id="Q7MYD7"/>
<dbReference type="STRING" id="243265.plu4743"/>
<dbReference type="GeneID" id="48850978"/>
<dbReference type="KEGG" id="plu:plu4743"/>
<dbReference type="eggNOG" id="COG0548">
    <property type="taxonomic scope" value="Bacteria"/>
</dbReference>
<dbReference type="HOGENOM" id="CLU_053680_1_1_6"/>
<dbReference type="OrthoDB" id="5915023at2"/>
<dbReference type="UniPathway" id="UPA00068">
    <property type="reaction ID" value="UER00107"/>
</dbReference>
<dbReference type="Proteomes" id="UP000002514">
    <property type="component" value="Chromosome"/>
</dbReference>
<dbReference type="GO" id="GO:0005737">
    <property type="term" value="C:cytoplasm"/>
    <property type="evidence" value="ECO:0007669"/>
    <property type="project" value="UniProtKB-SubCell"/>
</dbReference>
<dbReference type="GO" id="GO:0003991">
    <property type="term" value="F:acetylglutamate kinase activity"/>
    <property type="evidence" value="ECO:0007669"/>
    <property type="project" value="UniProtKB-UniRule"/>
</dbReference>
<dbReference type="GO" id="GO:0005524">
    <property type="term" value="F:ATP binding"/>
    <property type="evidence" value="ECO:0007669"/>
    <property type="project" value="UniProtKB-UniRule"/>
</dbReference>
<dbReference type="GO" id="GO:0042450">
    <property type="term" value="P:arginine biosynthetic process via ornithine"/>
    <property type="evidence" value="ECO:0007669"/>
    <property type="project" value="UniProtKB-UniRule"/>
</dbReference>
<dbReference type="GO" id="GO:0006526">
    <property type="term" value="P:L-arginine biosynthetic process"/>
    <property type="evidence" value="ECO:0007669"/>
    <property type="project" value="UniProtKB-UniPathway"/>
</dbReference>
<dbReference type="CDD" id="cd04249">
    <property type="entry name" value="AAK_NAGK-NC"/>
    <property type="match status" value="1"/>
</dbReference>
<dbReference type="FunFam" id="3.40.1160.10:FF:000008">
    <property type="entry name" value="Acetylglutamate kinase"/>
    <property type="match status" value="1"/>
</dbReference>
<dbReference type="Gene3D" id="3.40.1160.10">
    <property type="entry name" value="Acetylglutamate kinase-like"/>
    <property type="match status" value="1"/>
</dbReference>
<dbReference type="HAMAP" id="MF_00082">
    <property type="entry name" value="ArgB"/>
    <property type="match status" value="1"/>
</dbReference>
<dbReference type="InterPro" id="IPR036393">
    <property type="entry name" value="AceGlu_kinase-like_sf"/>
</dbReference>
<dbReference type="InterPro" id="IPR004662">
    <property type="entry name" value="AcgluKinase_fam"/>
</dbReference>
<dbReference type="InterPro" id="IPR037528">
    <property type="entry name" value="ArgB"/>
</dbReference>
<dbReference type="InterPro" id="IPR001048">
    <property type="entry name" value="Asp/Glu/Uridylate_kinase"/>
</dbReference>
<dbReference type="InterPro" id="IPR041731">
    <property type="entry name" value="NAGK-NC"/>
</dbReference>
<dbReference type="NCBIfam" id="TIGR00761">
    <property type="entry name" value="argB"/>
    <property type="match status" value="1"/>
</dbReference>
<dbReference type="PANTHER" id="PTHR23342">
    <property type="entry name" value="N-ACETYLGLUTAMATE SYNTHASE"/>
    <property type="match status" value="1"/>
</dbReference>
<dbReference type="PANTHER" id="PTHR23342:SF0">
    <property type="entry name" value="N-ACETYLGLUTAMATE SYNTHASE, MITOCHONDRIAL"/>
    <property type="match status" value="1"/>
</dbReference>
<dbReference type="Pfam" id="PF00696">
    <property type="entry name" value="AA_kinase"/>
    <property type="match status" value="1"/>
</dbReference>
<dbReference type="PIRSF" id="PIRSF000728">
    <property type="entry name" value="NAGK"/>
    <property type="match status" value="1"/>
</dbReference>
<dbReference type="SUPFAM" id="SSF53633">
    <property type="entry name" value="Carbamate kinase-like"/>
    <property type="match status" value="1"/>
</dbReference>